<keyword id="KW-0030">Aminoacyl-tRNA synthetase</keyword>
<keyword id="KW-0067">ATP-binding</keyword>
<keyword id="KW-0963">Cytoplasm</keyword>
<keyword id="KW-0436">Ligase</keyword>
<keyword id="KW-0479">Metal-binding</keyword>
<keyword id="KW-0547">Nucleotide-binding</keyword>
<keyword id="KW-0648">Protein biosynthesis</keyword>
<keyword id="KW-1185">Reference proteome</keyword>
<keyword id="KW-0862">Zinc</keyword>
<dbReference type="EC" id="6.1.1.5" evidence="1"/>
<dbReference type="EMBL" id="AP008955">
    <property type="protein sequence ID" value="BAH44795.1"/>
    <property type="molecule type" value="Genomic_DNA"/>
</dbReference>
<dbReference type="RefSeq" id="WP_015892079.1">
    <property type="nucleotide sequence ID" value="NC_012491.1"/>
</dbReference>
<dbReference type="SMR" id="C0ZG86"/>
<dbReference type="STRING" id="358681.BBR47_38180"/>
<dbReference type="KEGG" id="bbe:BBR47_38180"/>
<dbReference type="eggNOG" id="COG0060">
    <property type="taxonomic scope" value="Bacteria"/>
</dbReference>
<dbReference type="HOGENOM" id="CLU_001493_7_0_9"/>
<dbReference type="Proteomes" id="UP000001877">
    <property type="component" value="Chromosome"/>
</dbReference>
<dbReference type="GO" id="GO:0005829">
    <property type="term" value="C:cytosol"/>
    <property type="evidence" value="ECO:0007669"/>
    <property type="project" value="TreeGrafter"/>
</dbReference>
<dbReference type="GO" id="GO:0002161">
    <property type="term" value="F:aminoacyl-tRNA deacylase activity"/>
    <property type="evidence" value="ECO:0007669"/>
    <property type="project" value="InterPro"/>
</dbReference>
<dbReference type="GO" id="GO:0005524">
    <property type="term" value="F:ATP binding"/>
    <property type="evidence" value="ECO:0007669"/>
    <property type="project" value="UniProtKB-UniRule"/>
</dbReference>
<dbReference type="GO" id="GO:0004822">
    <property type="term" value="F:isoleucine-tRNA ligase activity"/>
    <property type="evidence" value="ECO:0007669"/>
    <property type="project" value="UniProtKB-UniRule"/>
</dbReference>
<dbReference type="GO" id="GO:0000049">
    <property type="term" value="F:tRNA binding"/>
    <property type="evidence" value="ECO:0007669"/>
    <property type="project" value="InterPro"/>
</dbReference>
<dbReference type="GO" id="GO:0008270">
    <property type="term" value="F:zinc ion binding"/>
    <property type="evidence" value="ECO:0007669"/>
    <property type="project" value="UniProtKB-UniRule"/>
</dbReference>
<dbReference type="GO" id="GO:0006428">
    <property type="term" value="P:isoleucyl-tRNA aminoacylation"/>
    <property type="evidence" value="ECO:0007669"/>
    <property type="project" value="UniProtKB-UniRule"/>
</dbReference>
<dbReference type="CDD" id="cd07960">
    <property type="entry name" value="Anticodon_Ia_Ile_BEm"/>
    <property type="match status" value="1"/>
</dbReference>
<dbReference type="CDD" id="cd00818">
    <property type="entry name" value="IleRS_core"/>
    <property type="match status" value="1"/>
</dbReference>
<dbReference type="FunFam" id="1.10.730.20:FF:000001">
    <property type="entry name" value="Isoleucine--tRNA ligase"/>
    <property type="match status" value="1"/>
</dbReference>
<dbReference type="FunFam" id="3.40.50.620:FF:000152">
    <property type="entry name" value="Isoleucine--tRNA ligase"/>
    <property type="match status" value="1"/>
</dbReference>
<dbReference type="Gene3D" id="1.10.730.20">
    <property type="match status" value="1"/>
</dbReference>
<dbReference type="Gene3D" id="3.40.50.620">
    <property type="entry name" value="HUPs"/>
    <property type="match status" value="2"/>
</dbReference>
<dbReference type="Gene3D" id="1.10.10.830">
    <property type="entry name" value="Ile-tRNA synthetase CP2 domain-like"/>
    <property type="match status" value="1"/>
</dbReference>
<dbReference type="HAMAP" id="MF_02002">
    <property type="entry name" value="Ile_tRNA_synth_type1"/>
    <property type="match status" value="1"/>
</dbReference>
<dbReference type="InterPro" id="IPR001412">
    <property type="entry name" value="aa-tRNA-synth_I_CS"/>
</dbReference>
<dbReference type="InterPro" id="IPR002300">
    <property type="entry name" value="aa-tRNA-synth_Ia"/>
</dbReference>
<dbReference type="InterPro" id="IPR033708">
    <property type="entry name" value="Anticodon_Ile_BEm"/>
</dbReference>
<dbReference type="InterPro" id="IPR002301">
    <property type="entry name" value="Ile-tRNA-ligase"/>
</dbReference>
<dbReference type="InterPro" id="IPR023585">
    <property type="entry name" value="Ile-tRNA-ligase_type1"/>
</dbReference>
<dbReference type="InterPro" id="IPR050081">
    <property type="entry name" value="Ile-tRNA_ligase"/>
</dbReference>
<dbReference type="InterPro" id="IPR013155">
    <property type="entry name" value="M/V/L/I-tRNA-synth_anticd-bd"/>
</dbReference>
<dbReference type="InterPro" id="IPR014729">
    <property type="entry name" value="Rossmann-like_a/b/a_fold"/>
</dbReference>
<dbReference type="InterPro" id="IPR009080">
    <property type="entry name" value="tRNAsynth_Ia_anticodon-bd"/>
</dbReference>
<dbReference type="InterPro" id="IPR009008">
    <property type="entry name" value="Val/Leu/Ile-tRNA-synth_edit"/>
</dbReference>
<dbReference type="NCBIfam" id="TIGR00392">
    <property type="entry name" value="ileS"/>
    <property type="match status" value="1"/>
</dbReference>
<dbReference type="PANTHER" id="PTHR42765:SF1">
    <property type="entry name" value="ISOLEUCINE--TRNA LIGASE, MITOCHONDRIAL"/>
    <property type="match status" value="1"/>
</dbReference>
<dbReference type="PANTHER" id="PTHR42765">
    <property type="entry name" value="SOLEUCYL-TRNA SYNTHETASE"/>
    <property type="match status" value="1"/>
</dbReference>
<dbReference type="Pfam" id="PF08264">
    <property type="entry name" value="Anticodon_1"/>
    <property type="match status" value="1"/>
</dbReference>
<dbReference type="Pfam" id="PF00133">
    <property type="entry name" value="tRNA-synt_1"/>
    <property type="match status" value="1"/>
</dbReference>
<dbReference type="PRINTS" id="PR00984">
    <property type="entry name" value="TRNASYNTHILE"/>
</dbReference>
<dbReference type="SUPFAM" id="SSF47323">
    <property type="entry name" value="Anticodon-binding domain of a subclass of class I aminoacyl-tRNA synthetases"/>
    <property type="match status" value="1"/>
</dbReference>
<dbReference type="SUPFAM" id="SSF52374">
    <property type="entry name" value="Nucleotidylyl transferase"/>
    <property type="match status" value="1"/>
</dbReference>
<dbReference type="SUPFAM" id="SSF50677">
    <property type="entry name" value="ValRS/IleRS/LeuRS editing domain"/>
    <property type="match status" value="1"/>
</dbReference>
<dbReference type="PROSITE" id="PS00178">
    <property type="entry name" value="AA_TRNA_LIGASE_I"/>
    <property type="match status" value="1"/>
</dbReference>
<feature type="chain" id="PRO_1000189132" description="Isoleucine--tRNA ligase">
    <location>
        <begin position="1"/>
        <end position="925"/>
    </location>
</feature>
<feature type="short sequence motif" description="'HIGH' region">
    <location>
        <begin position="57"/>
        <end position="67"/>
    </location>
</feature>
<feature type="short sequence motif" description="'KMSKS' region">
    <location>
        <begin position="594"/>
        <end position="598"/>
    </location>
</feature>
<feature type="binding site" evidence="1">
    <location>
        <position position="553"/>
    </location>
    <ligand>
        <name>L-isoleucyl-5'-AMP</name>
        <dbReference type="ChEBI" id="CHEBI:178002"/>
    </ligand>
</feature>
<feature type="binding site" evidence="1">
    <location>
        <position position="597"/>
    </location>
    <ligand>
        <name>ATP</name>
        <dbReference type="ChEBI" id="CHEBI:30616"/>
    </ligand>
</feature>
<feature type="binding site" evidence="1">
    <location>
        <position position="889"/>
    </location>
    <ligand>
        <name>Zn(2+)</name>
        <dbReference type="ChEBI" id="CHEBI:29105"/>
    </ligand>
</feature>
<feature type="binding site" evidence="1">
    <location>
        <position position="892"/>
    </location>
    <ligand>
        <name>Zn(2+)</name>
        <dbReference type="ChEBI" id="CHEBI:29105"/>
    </ligand>
</feature>
<feature type="binding site" evidence="1">
    <location>
        <position position="909"/>
    </location>
    <ligand>
        <name>Zn(2+)</name>
        <dbReference type="ChEBI" id="CHEBI:29105"/>
    </ligand>
</feature>
<feature type="binding site" evidence="1">
    <location>
        <position position="912"/>
    </location>
    <ligand>
        <name>Zn(2+)</name>
        <dbReference type="ChEBI" id="CHEBI:29105"/>
    </ligand>
</feature>
<sequence>MDYSKTLALPKTEFPMRGNLPSREPQMQAVWEEQNIYQQVLDRTKDRPSFVLHDGPPYANGDIHIGHALNKILKDFIVRYKSMAGFYAPYIPGWDTHGLPIEQAIINAQGLDRRSIEVNDFRQRCEEYAWSYIDKQRDQFKRLGVRGDWENPYVTLLPEYEANQIRVFGEMAKKGYIYKGLRCVYWSPSSETALADAEIEYKDKRSPSIYVSFQVADGKGKLDIETGVVIWTTTPWTLPANLAISLHPELEYNVVKVDGRKFLVANGLIEAASKEIGWEGVEILATFKGQELEGVETQHPFYDRKSPLILGEHVTLDAGTGCVHTAPGHGEDDFNVGQKYNLGVLCPVDHEGKMTNEAPGFEGLFYEDANKVITEKLKENGALLKLSFFTHSYPHDWRTKKPVIYRATEQWFASIDGFRTQMLEAIKNVKWIPHWGETRLANMIADRGDWCISRQRVWGVPIPIFYCKACNEPIINDTTINHVADLFRKEGSKVWFSREANELVPEGLSCTKCDCNDFRKETDIMDVWFDSGSSHQAVLRERGIAWPADMYLEGSDQYRGWFNSSLSTGVAVYGTAPYKSVLSHGFALDGEGRKMSKSLGNVIVPQQVIDKMGADILRLWVASVDYQADVRISDAILNQIAEVYRKIRNTFRFLLGNLDGFNPATDRVAYEELGELDRYVLAKAAKVAKRTRKAYDEYQFHTVFHAVHNFCVIDLSAFYLDICKDRLYVEAPDSLKRRAAQTVMYDCLLSLVKLVAPLLPHTADEVWAFIPGVEEKSVQLTDMPEGDEQHLSFAAEAESKWDAFLAIRDEVLKAMEEARRNKVFGNSVDAKLALYPQTEEVAKTLAAMDDLADLFIVAHVDVHSGSAPAEAVQLEGIAAVVSAADGGKCERCRVVKPDVGTRESHASLCVRCADVVEQHYAHVTE</sequence>
<name>SYI_BREBN</name>
<evidence type="ECO:0000255" key="1">
    <source>
        <dbReference type="HAMAP-Rule" id="MF_02002"/>
    </source>
</evidence>
<proteinExistence type="inferred from homology"/>
<comment type="function">
    <text evidence="1">Catalyzes the attachment of isoleucine to tRNA(Ile). As IleRS can inadvertently accommodate and process structurally similar amino acids such as valine, to avoid such errors it has two additional distinct tRNA(Ile)-dependent editing activities. One activity is designated as 'pretransfer' editing and involves the hydrolysis of activated Val-AMP. The other activity is designated 'posttransfer' editing and involves deacylation of mischarged Val-tRNA(Ile).</text>
</comment>
<comment type="catalytic activity">
    <reaction evidence="1">
        <text>tRNA(Ile) + L-isoleucine + ATP = L-isoleucyl-tRNA(Ile) + AMP + diphosphate</text>
        <dbReference type="Rhea" id="RHEA:11060"/>
        <dbReference type="Rhea" id="RHEA-COMP:9666"/>
        <dbReference type="Rhea" id="RHEA-COMP:9695"/>
        <dbReference type="ChEBI" id="CHEBI:30616"/>
        <dbReference type="ChEBI" id="CHEBI:33019"/>
        <dbReference type="ChEBI" id="CHEBI:58045"/>
        <dbReference type="ChEBI" id="CHEBI:78442"/>
        <dbReference type="ChEBI" id="CHEBI:78528"/>
        <dbReference type="ChEBI" id="CHEBI:456215"/>
        <dbReference type="EC" id="6.1.1.5"/>
    </reaction>
</comment>
<comment type="cofactor">
    <cofactor evidence="1">
        <name>Zn(2+)</name>
        <dbReference type="ChEBI" id="CHEBI:29105"/>
    </cofactor>
    <text evidence="1">Binds 1 zinc ion per subunit.</text>
</comment>
<comment type="subunit">
    <text evidence="1">Monomer.</text>
</comment>
<comment type="subcellular location">
    <subcellularLocation>
        <location evidence="1">Cytoplasm</location>
    </subcellularLocation>
</comment>
<comment type="domain">
    <text evidence="1">IleRS has two distinct active sites: one for aminoacylation and one for editing. The misactivated valine is translocated from the active site to the editing site, which sterically excludes the correctly activated isoleucine. The single editing site contains two valyl binding pockets, one specific for each substrate (Val-AMP or Val-tRNA(Ile)).</text>
</comment>
<comment type="similarity">
    <text evidence="1">Belongs to the class-I aminoacyl-tRNA synthetase family. IleS type 1 subfamily.</text>
</comment>
<protein>
    <recommendedName>
        <fullName evidence="1">Isoleucine--tRNA ligase</fullName>
        <ecNumber evidence="1">6.1.1.5</ecNumber>
    </recommendedName>
    <alternativeName>
        <fullName evidence="1">Isoleucyl-tRNA synthetase</fullName>
        <shortName evidence="1">IleRS</shortName>
    </alternativeName>
</protein>
<accession>C0ZG86</accession>
<gene>
    <name evidence="1" type="primary">ileS</name>
    <name type="ordered locus">BBR47_38180</name>
</gene>
<organism>
    <name type="scientific">Brevibacillus brevis (strain 47 / JCM 6285 / NBRC 100599)</name>
    <dbReference type="NCBI Taxonomy" id="358681"/>
    <lineage>
        <taxon>Bacteria</taxon>
        <taxon>Bacillati</taxon>
        <taxon>Bacillota</taxon>
        <taxon>Bacilli</taxon>
        <taxon>Bacillales</taxon>
        <taxon>Paenibacillaceae</taxon>
        <taxon>Brevibacillus</taxon>
    </lineage>
</organism>
<reference key="1">
    <citation type="submission" date="2005-03" db="EMBL/GenBank/DDBJ databases">
        <title>Brevibacillus brevis strain 47, complete genome.</title>
        <authorList>
            <person name="Hosoyama A."/>
            <person name="Yamada R."/>
            <person name="Hongo Y."/>
            <person name="Terui Y."/>
            <person name="Ankai A."/>
            <person name="Masuyama W."/>
            <person name="Sekiguchi M."/>
            <person name="Takeda T."/>
            <person name="Asano K."/>
            <person name="Ohji S."/>
            <person name="Ichikawa N."/>
            <person name="Narita S."/>
            <person name="Aoki N."/>
            <person name="Miura H."/>
            <person name="Matsushita S."/>
            <person name="Sekigawa T."/>
            <person name="Yamagata H."/>
            <person name="Yoshikawa H."/>
            <person name="Udaka S."/>
            <person name="Tanikawa S."/>
            <person name="Fujita N."/>
        </authorList>
    </citation>
    <scope>NUCLEOTIDE SEQUENCE [LARGE SCALE GENOMIC DNA]</scope>
    <source>
        <strain>47 / JCM 6285 / NBRC 100599</strain>
    </source>
</reference>